<organism>
    <name type="scientific">Arabidopsis thaliana</name>
    <name type="common">Mouse-ear cress</name>
    <dbReference type="NCBI Taxonomy" id="3702"/>
    <lineage>
        <taxon>Eukaryota</taxon>
        <taxon>Viridiplantae</taxon>
        <taxon>Streptophyta</taxon>
        <taxon>Embryophyta</taxon>
        <taxon>Tracheophyta</taxon>
        <taxon>Spermatophyta</taxon>
        <taxon>Magnoliopsida</taxon>
        <taxon>eudicotyledons</taxon>
        <taxon>Gunneridae</taxon>
        <taxon>Pentapetalae</taxon>
        <taxon>rosids</taxon>
        <taxon>malvids</taxon>
        <taxon>Brassicales</taxon>
        <taxon>Brassicaceae</taxon>
        <taxon>Camelineae</taxon>
        <taxon>Arabidopsis</taxon>
    </lineage>
</organism>
<feature type="chain" id="PRO_0000423827" description="Large ribosomal subunit protein eL20w">
    <location>
        <begin position="1"/>
        <end position="178"/>
    </location>
</feature>
<keyword id="KW-1185">Reference proteome</keyword>
<keyword id="KW-0687">Ribonucleoprotein</keyword>
<keyword id="KW-0689">Ribosomal protein</keyword>
<proteinExistence type="evidence at transcript level"/>
<accession>Q8L7K0</accession>
<evidence type="ECO:0000303" key="1">
    <source>
    </source>
</evidence>
<evidence type="ECO:0000305" key="2"/>
<comment type="similarity">
    <text evidence="2">Belongs to the eukaryotic ribosomal protein eL20 family.</text>
</comment>
<reference key="1">
    <citation type="journal article" date="2000" name="Nature">
        <title>Sequence and analysis of chromosome 1 of the plant Arabidopsis thaliana.</title>
        <authorList>
            <person name="Theologis A."/>
            <person name="Ecker J.R."/>
            <person name="Palm C.J."/>
            <person name="Federspiel N.A."/>
            <person name="Kaul S."/>
            <person name="White O."/>
            <person name="Alonso J."/>
            <person name="Altafi H."/>
            <person name="Araujo R."/>
            <person name="Bowman C.L."/>
            <person name="Brooks S.Y."/>
            <person name="Buehler E."/>
            <person name="Chan A."/>
            <person name="Chao Q."/>
            <person name="Chen H."/>
            <person name="Cheuk R.F."/>
            <person name="Chin C.W."/>
            <person name="Chung M.K."/>
            <person name="Conn L."/>
            <person name="Conway A.B."/>
            <person name="Conway A.R."/>
            <person name="Creasy T.H."/>
            <person name="Dewar K."/>
            <person name="Dunn P."/>
            <person name="Etgu P."/>
            <person name="Feldblyum T.V."/>
            <person name="Feng J.-D."/>
            <person name="Fong B."/>
            <person name="Fujii C.Y."/>
            <person name="Gill J.E."/>
            <person name="Goldsmith A.D."/>
            <person name="Haas B."/>
            <person name="Hansen N.F."/>
            <person name="Hughes B."/>
            <person name="Huizar L."/>
            <person name="Hunter J.L."/>
            <person name="Jenkins J."/>
            <person name="Johnson-Hopson C."/>
            <person name="Khan S."/>
            <person name="Khaykin E."/>
            <person name="Kim C.J."/>
            <person name="Koo H.L."/>
            <person name="Kremenetskaia I."/>
            <person name="Kurtz D.B."/>
            <person name="Kwan A."/>
            <person name="Lam B."/>
            <person name="Langin-Hooper S."/>
            <person name="Lee A."/>
            <person name="Lee J.M."/>
            <person name="Lenz C.A."/>
            <person name="Li J.H."/>
            <person name="Li Y.-P."/>
            <person name="Lin X."/>
            <person name="Liu S.X."/>
            <person name="Liu Z.A."/>
            <person name="Luros J.S."/>
            <person name="Maiti R."/>
            <person name="Marziali A."/>
            <person name="Militscher J."/>
            <person name="Miranda M."/>
            <person name="Nguyen M."/>
            <person name="Nierman W.C."/>
            <person name="Osborne B.I."/>
            <person name="Pai G."/>
            <person name="Peterson J."/>
            <person name="Pham P.K."/>
            <person name="Rizzo M."/>
            <person name="Rooney T."/>
            <person name="Rowley D."/>
            <person name="Sakano H."/>
            <person name="Salzberg S.L."/>
            <person name="Schwartz J.R."/>
            <person name="Shinn P."/>
            <person name="Southwick A.M."/>
            <person name="Sun H."/>
            <person name="Tallon L.J."/>
            <person name="Tambunga G."/>
            <person name="Toriumi M.J."/>
            <person name="Town C.D."/>
            <person name="Utterback T."/>
            <person name="Van Aken S."/>
            <person name="Vaysberg M."/>
            <person name="Vysotskaia V.S."/>
            <person name="Walker M."/>
            <person name="Wu D."/>
            <person name="Yu G."/>
            <person name="Fraser C.M."/>
            <person name="Venter J.C."/>
            <person name="Davis R.W."/>
        </authorList>
    </citation>
    <scope>NUCLEOTIDE SEQUENCE [LARGE SCALE GENOMIC DNA]</scope>
    <source>
        <strain>cv. Columbia</strain>
    </source>
</reference>
<reference key="2">
    <citation type="journal article" date="2017" name="Plant J.">
        <title>Araport11: a complete reannotation of the Arabidopsis thaliana reference genome.</title>
        <authorList>
            <person name="Cheng C.Y."/>
            <person name="Krishnakumar V."/>
            <person name="Chan A.P."/>
            <person name="Thibaud-Nissen F."/>
            <person name="Schobel S."/>
            <person name="Town C.D."/>
        </authorList>
    </citation>
    <scope>GENOME REANNOTATION</scope>
    <source>
        <strain>cv. Columbia</strain>
    </source>
</reference>
<reference key="3">
    <citation type="journal article" date="2003" name="Science">
        <title>Empirical analysis of transcriptional activity in the Arabidopsis genome.</title>
        <authorList>
            <person name="Yamada K."/>
            <person name="Lim J."/>
            <person name="Dale J.M."/>
            <person name="Chen H."/>
            <person name="Shinn P."/>
            <person name="Palm C.J."/>
            <person name="Southwick A.M."/>
            <person name="Wu H.C."/>
            <person name="Kim C.J."/>
            <person name="Nguyen M."/>
            <person name="Pham P.K."/>
            <person name="Cheuk R.F."/>
            <person name="Karlin-Newmann G."/>
            <person name="Liu S.X."/>
            <person name="Lam B."/>
            <person name="Sakano H."/>
            <person name="Wu T."/>
            <person name="Yu G."/>
            <person name="Miranda M."/>
            <person name="Quach H.L."/>
            <person name="Tripp M."/>
            <person name="Chang C.H."/>
            <person name="Lee J.M."/>
            <person name="Toriumi M.J."/>
            <person name="Chan M.M."/>
            <person name="Tang C.C."/>
            <person name="Onodera C.S."/>
            <person name="Deng J.M."/>
            <person name="Akiyama K."/>
            <person name="Ansari Y."/>
            <person name="Arakawa T."/>
            <person name="Banh J."/>
            <person name="Banno F."/>
            <person name="Bowser L."/>
            <person name="Brooks S.Y."/>
            <person name="Carninci P."/>
            <person name="Chao Q."/>
            <person name="Choy N."/>
            <person name="Enju A."/>
            <person name="Goldsmith A.D."/>
            <person name="Gurjal M."/>
            <person name="Hansen N.F."/>
            <person name="Hayashizaki Y."/>
            <person name="Johnson-Hopson C."/>
            <person name="Hsuan V.W."/>
            <person name="Iida K."/>
            <person name="Karnes M."/>
            <person name="Khan S."/>
            <person name="Koesema E."/>
            <person name="Ishida J."/>
            <person name="Jiang P.X."/>
            <person name="Jones T."/>
            <person name="Kawai J."/>
            <person name="Kamiya A."/>
            <person name="Meyers C."/>
            <person name="Nakajima M."/>
            <person name="Narusaka M."/>
            <person name="Seki M."/>
            <person name="Sakurai T."/>
            <person name="Satou M."/>
            <person name="Tamse R."/>
            <person name="Vaysberg M."/>
            <person name="Wallender E.K."/>
            <person name="Wong C."/>
            <person name="Yamamura Y."/>
            <person name="Yuan S."/>
            <person name="Shinozaki K."/>
            <person name="Davis R.W."/>
            <person name="Theologis A."/>
            <person name="Ecker J.R."/>
        </authorList>
    </citation>
    <scope>NUCLEOTIDE SEQUENCE [LARGE SCALE MRNA]</scope>
    <source>
        <strain>cv. Columbia</strain>
    </source>
</reference>
<reference key="4">
    <citation type="journal article" date="2001" name="Plant Physiol.">
        <title>The organization of cytoplasmic ribosomal protein genes in the Arabidopsis genome.</title>
        <authorList>
            <person name="Barakat A."/>
            <person name="Szick-Miranda K."/>
            <person name="Chang I.-F."/>
            <person name="Guyot R."/>
            <person name="Blanc G."/>
            <person name="Cooke R."/>
            <person name="Delseny M."/>
            <person name="Bailey-Serres J."/>
        </authorList>
    </citation>
    <scope>GENE FAMILY ORGANIZATION</scope>
    <scope>NOMENCLATURE</scope>
</reference>
<reference key="5">
    <citation type="journal article" date="2023" name="Plant Cell">
        <title>An updated nomenclature for plant ribosomal protein genes.</title>
        <authorList>
            <person name="Scarpin M.R."/>
            <person name="Busche M."/>
            <person name="Martinez R.E."/>
            <person name="Harper L.C."/>
            <person name="Reiser L."/>
            <person name="Szakonyi D."/>
            <person name="Merchante C."/>
            <person name="Lan T."/>
            <person name="Xiong W."/>
            <person name="Mo B."/>
            <person name="Tang G."/>
            <person name="Chen X."/>
            <person name="Bailey-Serres J."/>
            <person name="Browning K.S."/>
            <person name="Brunkard J.O."/>
        </authorList>
    </citation>
    <scope>NOMENCLATURE</scope>
</reference>
<sequence>MSVIRLHQYQVVGRALPTEKDEQPKIYRMKLWATNEVLAKSKFWYYLRRQKKVKKSNGQMLAINEIFEKNPTTIKNFGIWLRYQSRTGYHNMYKEYRDTTLNGAVEQMYTEMASRHRVRFPCIQIIKTATVPASLCKRESTKQFHNSKIKFPLVFRKVRPPTRKLKTTFKANKPNLFM</sequence>
<dbReference type="EMBL" id="AC022455">
    <property type="status" value="NOT_ANNOTATED_CDS"/>
    <property type="molecule type" value="Genomic_DNA"/>
</dbReference>
<dbReference type="EMBL" id="CP002684">
    <property type="protein sequence ID" value="AEE31159.1"/>
    <property type="molecule type" value="Genomic_DNA"/>
</dbReference>
<dbReference type="EMBL" id="AY128411">
    <property type="protein sequence ID" value="AAM91614.1"/>
    <property type="molecule type" value="mRNA"/>
</dbReference>
<dbReference type="EMBL" id="BT000059">
    <property type="protein sequence ID" value="AAN15378.1"/>
    <property type="molecule type" value="mRNA"/>
</dbReference>
<dbReference type="RefSeq" id="NP_849729.1">
    <property type="nucleotide sequence ID" value="NM_179398.1"/>
</dbReference>
<dbReference type="SMR" id="Q8L7K0"/>
<dbReference type="BioGRID" id="25110">
    <property type="interactions" value="37"/>
</dbReference>
<dbReference type="FunCoup" id="Q8L7K0">
    <property type="interactions" value="3152"/>
</dbReference>
<dbReference type="STRING" id="3702.Q8L7K0"/>
<dbReference type="MetOSite" id="Q8L7K0"/>
<dbReference type="PaxDb" id="3702-AT1G29965.1"/>
<dbReference type="ProteomicsDB" id="236620"/>
<dbReference type="DNASU" id="839875"/>
<dbReference type="EnsemblPlants" id="AT1G29965.1">
    <property type="protein sequence ID" value="AT1G29965.1"/>
    <property type="gene ID" value="AT1G29965"/>
</dbReference>
<dbReference type="GeneID" id="839875"/>
<dbReference type="Gramene" id="AT1G29965.1">
    <property type="protein sequence ID" value="AT1G29965.1"/>
    <property type="gene ID" value="AT1G29965"/>
</dbReference>
<dbReference type="KEGG" id="ath:AT1G29965"/>
<dbReference type="Araport" id="AT1G29965"/>
<dbReference type="TAIR" id="AT1G29965"/>
<dbReference type="eggNOG" id="KOG0829">
    <property type="taxonomic scope" value="Eukaryota"/>
</dbReference>
<dbReference type="HOGENOM" id="CLU_080773_1_1_1"/>
<dbReference type="InParanoid" id="Q8L7K0"/>
<dbReference type="OMA" id="WYETLAY"/>
<dbReference type="PhylomeDB" id="Q8L7K0"/>
<dbReference type="PRO" id="PR:Q8L7K0"/>
<dbReference type="Proteomes" id="UP000006548">
    <property type="component" value="Chromosome 1"/>
</dbReference>
<dbReference type="ExpressionAtlas" id="Q8L7K0">
    <property type="expression patterns" value="baseline and differential"/>
</dbReference>
<dbReference type="GO" id="GO:0022625">
    <property type="term" value="C:cytosolic large ribosomal subunit"/>
    <property type="evidence" value="ECO:0007005"/>
    <property type="project" value="TAIR"/>
</dbReference>
<dbReference type="GO" id="GO:0005634">
    <property type="term" value="C:nucleus"/>
    <property type="evidence" value="ECO:0007005"/>
    <property type="project" value="TAIR"/>
</dbReference>
<dbReference type="GO" id="GO:0009506">
    <property type="term" value="C:plasmodesma"/>
    <property type="evidence" value="ECO:0007005"/>
    <property type="project" value="TAIR"/>
</dbReference>
<dbReference type="GO" id="GO:0003729">
    <property type="term" value="F:mRNA binding"/>
    <property type="evidence" value="ECO:0000314"/>
    <property type="project" value="TAIR"/>
</dbReference>
<dbReference type="GO" id="GO:0003735">
    <property type="term" value="F:structural constituent of ribosome"/>
    <property type="evidence" value="ECO:0000314"/>
    <property type="project" value="CAFA"/>
</dbReference>
<dbReference type="GO" id="GO:0006412">
    <property type="term" value="P:translation"/>
    <property type="evidence" value="ECO:0007669"/>
    <property type="project" value="InterPro"/>
</dbReference>
<dbReference type="FunFam" id="3.10.20.10:FF:000001">
    <property type="entry name" value="60S ribosomal protein L18a"/>
    <property type="match status" value="1"/>
</dbReference>
<dbReference type="FunFam" id="3.10.20.10:FF:000002">
    <property type="entry name" value="60S ribosomal protein L18a"/>
    <property type="match status" value="1"/>
</dbReference>
<dbReference type="Gene3D" id="3.10.20.10">
    <property type="match status" value="2"/>
</dbReference>
<dbReference type="HAMAP" id="MF_00273">
    <property type="entry name" value="Ribosomal_eL20"/>
    <property type="match status" value="1"/>
</dbReference>
<dbReference type="InterPro" id="IPR028877">
    <property type="entry name" value="Ribosomal_eL20"/>
</dbReference>
<dbReference type="InterPro" id="IPR023573">
    <property type="entry name" value="Ribosomal_eL20_dom"/>
</dbReference>
<dbReference type="InterPro" id="IPR021138">
    <property type="entry name" value="Ribosomal_eL20_eukaryotes"/>
</dbReference>
<dbReference type="PANTHER" id="PTHR10052">
    <property type="entry name" value="60S RIBOSOMAL PROTEIN L18A"/>
    <property type="match status" value="1"/>
</dbReference>
<dbReference type="Pfam" id="PF01775">
    <property type="entry name" value="Ribosomal_L18A"/>
    <property type="match status" value="1"/>
</dbReference>
<dbReference type="PIRSF" id="PIRSF002190">
    <property type="entry name" value="Ribosomal_L18a"/>
    <property type="match status" value="1"/>
</dbReference>
<dbReference type="SUPFAM" id="SSF160374">
    <property type="entry name" value="RplX-like"/>
    <property type="match status" value="1"/>
</dbReference>
<protein>
    <recommendedName>
        <fullName evidence="1">Large ribosomal subunit protein eL20w</fullName>
    </recommendedName>
    <alternativeName>
        <fullName>60S ribosomal protein L18a-4</fullName>
    </alternativeName>
</protein>
<name>R18A4_ARATH</name>
<gene>
    <name type="primary">RPL18AD</name>
    <name type="synonym">RPL18AA</name>
    <name type="ordered locus">At1g29965</name>
    <name type="ORF">T1P2</name>
</gene>